<name>IHFA_VIBCM</name>
<feature type="chain" id="PRO_1000190431" description="Integration host factor subunit alpha">
    <location>
        <begin position="1"/>
        <end position="98"/>
    </location>
</feature>
<feature type="region of interest" description="Disordered" evidence="2">
    <location>
        <begin position="51"/>
        <end position="71"/>
    </location>
</feature>
<feature type="compositionally biased region" description="Basic and acidic residues" evidence="2">
    <location>
        <begin position="53"/>
        <end position="69"/>
    </location>
</feature>
<keyword id="KW-0233">DNA recombination</keyword>
<keyword id="KW-0238">DNA-binding</keyword>
<keyword id="KW-0804">Transcription</keyword>
<keyword id="KW-0805">Transcription regulation</keyword>
<keyword id="KW-0810">Translation regulation</keyword>
<protein>
    <recommendedName>
        <fullName evidence="1">Integration host factor subunit alpha</fullName>
        <shortName evidence="1">IHF-alpha</shortName>
    </recommendedName>
</protein>
<organism>
    <name type="scientific">Vibrio cholerae serotype O1 (strain M66-2)</name>
    <dbReference type="NCBI Taxonomy" id="579112"/>
    <lineage>
        <taxon>Bacteria</taxon>
        <taxon>Pseudomonadati</taxon>
        <taxon>Pseudomonadota</taxon>
        <taxon>Gammaproteobacteria</taxon>
        <taxon>Vibrionales</taxon>
        <taxon>Vibrionaceae</taxon>
        <taxon>Vibrio</taxon>
    </lineage>
</organism>
<evidence type="ECO:0000255" key="1">
    <source>
        <dbReference type="HAMAP-Rule" id="MF_00380"/>
    </source>
</evidence>
<evidence type="ECO:0000256" key="2">
    <source>
        <dbReference type="SAM" id="MobiDB-lite"/>
    </source>
</evidence>
<sequence>MALTKAELAEALFEQLGMSKRDAKDTVEVFFEEIRKALESGEQVKLSGFGNFDLRDKNERPGRNPKTGEDIPITARRVVTFRPGQKLKARVENIKVEK</sequence>
<dbReference type="EMBL" id="CP001233">
    <property type="protein sequence ID" value="ACP05494.1"/>
    <property type="molecule type" value="Genomic_DNA"/>
</dbReference>
<dbReference type="RefSeq" id="WP_001229260.1">
    <property type="nucleotide sequence ID" value="NC_012578.1"/>
</dbReference>
<dbReference type="SMR" id="C3LLR8"/>
<dbReference type="GeneID" id="88785345"/>
<dbReference type="KEGG" id="vcm:VCM66_1177"/>
<dbReference type="HOGENOM" id="CLU_105066_1_3_6"/>
<dbReference type="Proteomes" id="UP000001217">
    <property type="component" value="Chromosome I"/>
</dbReference>
<dbReference type="GO" id="GO:0005829">
    <property type="term" value="C:cytosol"/>
    <property type="evidence" value="ECO:0007669"/>
    <property type="project" value="TreeGrafter"/>
</dbReference>
<dbReference type="GO" id="GO:0003677">
    <property type="term" value="F:DNA binding"/>
    <property type="evidence" value="ECO:0007669"/>
    <property type="project" value="UniProtKB-UniRule"/>
</dbReference>
<dbReference type="GO" id="GO:0030527">
    <property type="term" value="F:structural constituent of chromatin"/>
    <property type="evidence" value="ECO:0007669"/>
    <property type="project" value="InterPro"/>
</dbReference>
<dbReference type="GO" id="GO:0006310">
    <property type="term" value="P:DNA recombination"/>
    <property type="evidence" value="ECO:0007669"/>
    <property type="project" value="UniProtKB-UniRule"/>
</dbReference>
<dbReference type="GO" id="GO:0009893">
    <property type="term" value="P:positive regulation of metabolic process"/>
    <property type="evidence" value="ECO:0007669"/>
    <property type="project" value="UniProtKB-ARBA"/>
</dbReference>
<dbReference type="GO" id="GO:0006355">
    <property type="term" value="P:regulation of DNA-templated transcription"/>
    <property type="evidence" value="ECO:0007669"/>
    <property type="project" value="UniProtKB-UniRule"/>
</dbReference>
<dbReference type="GO" id="GO:0006417">
    <property type="term" value="P:regulation of translation"/>
    <property type="evidence" value="ECO:0007669"/>
    <property type="project" value="UniProtKB-UniRule"/>
</dbReference>
<dbReference type="CDD" id="cd13835">
    <property type="entry name" value="IHF_A"/>
    <property type="match status" value="1"/>
</dbReference>
<dbReference type="FunFam" id="4.10.520.10:FF:000002">
    <property type="entry name" value="Integration host factor subunit alpha"/>
    <property type="match status" value="1"/>
</dbReference>
<dbReference type="Gene3D" id="4.10.520.10">
    <property type="entry name" value="IHF-like DNA-binding proteins"/>
    <property type="match status" value="1"/>
</dbReference>
<dbReference type="HAMAP" id="MF_00380">
    <property type="entry name" value="IHF_alpha"/>
    <property type="match status" value="1"/>
</dbReference>
<dbReference type="InterPro" id="IPR000119">
    <property type="entry name" value="Hist_DNA-bd"/>
</dbReference>
<dbReference type="InterPro" id="IPR020816">
    <property type="entry name" value="Histone-like_DNA-bd_CS"/>
</dbReference>
<dbReference type="InterPro" id="IPR010992">
    <property type="entry name" value="IHF-like_DNA-bd_dom_sf"/>
</dbReference>
<dbReference type="InterPro" id="IPR005684">
    <property type="entry name" value="IHF_alpha"/>
</dbReference>
<dbReference type="NCBIfam" id="TIGR00987">
    <property type="entry name" value="himA"/>
    <property type="match status" value="1"/>
</dbReference>
<dbReference type="NCBIfam" id="NF001401">
    <property type="entry name" value="PRK00285.1"/>
    <property type="match status" value="1"/>
</dbReference>
<dbReference type="PANTHER" id="PTHR33175">
    <property type="entry name" value="DNA-BINDING PROTEIN HU"/>
    <property type="match status" value="1"/>
</dbReference>
<dbReference type="PANTHER" id="PTHR33175:SF2">
    <property type="entry name" value="INTEGRATION HOST FACTOR SUBUNIT ALPHA"/>
    <property type="match status" value="1"/>
</dbReference>
<dbReference type="Pfam" id="PF00216">
    <property type="entry name" value="Bac_DNA_binding"/>
    <property type="match status" value="1"/>
</dbReference>
<dbReference type="PRINTS" id="PR01727">
    <property type="entry name" value="DNABINDINGHU"/>
</dbReference>
<dbReference type="SMART" id="SM00411">
    <property type="entry name" value="BHL"/>
    <property type="match status" value="1"/>
</dbReference>
<dbReference type="SUPFAM" id="SSF47729">
    <property type="entry name" value="IHF-like DNA-binding proteins"/>
    <property type="match status" value="1"/>
</dbReference>
<dbReference type="PROSITE" id="PS00045">
    <property type="entry name" value="HISTONE_LIKE"/>
    <property type="match status" value="1"/>
</dbReference>
<accession>C3LLR8</accession>
<reference key="1">
    <citation type="journal article" date="2008" name="PLoS ONE">
        <title>A recalibrated molecular clock and independent origins for the cholera pandemic clones.</title>
        <authorList>
            <person name="Feng L."/>
            <person name="Reeves P.R."/>
            <person name="Lan R."/>
            <person name="Ren Y."/>
            <person name="Gao C."/>
            <person name="Zhou Z."/>
            <person name="Ren Y."/>
            <person name="Cheng J."/>
            <person name="Wang W."/>
            <person name="Wang J."/>
            <person name="Qian W."/>
            <person name="Li D."/>
            <person name="Wang L."/>
        </authorList>
    </citation>
    <scope>NUCLEOTIDE SEQUENCE [LARGE SCALE GENOMIC DNA]</scope>
    <source>
        <strain>M66-2</strain>
    </source>
</reference>
<gene>
    <name evidence="1" type="primary">ihfA</name>
    <name evidence="1" type="synonym">himA</name>
    <name type="ordered locus">VCM66_1177</name>
</gene>
<proteinExistence type="inferred from homology"/>
<comment type="function">
    <text evidence="1">This protein is one of the two subunits of integration host factor, a specific DNA-binding protein that functions in genetic recombination as well as in transcriptional and translational control.</text>
</comment>
<comment type="subunit">
    <text evidence="1">Heterodimer of an alpha and a beta chain.</text>
</comment>
<comment type="similarity">
    <text evidence="1">Belongs to the bacterial histone-like protein family.</text>
</comment>